<feature type="signal peptide" evidence="2">
    <location>
        <begin position="1"/>
        <end position="30"/>
    </location>
</feature>
<feature type="chain" id="PRO_0000372830" description="Probable inactive purple acid phosphatase 28">
    <location>
        <begin position="31"/>
        <end position="397"/>
    </location>
</feature>
<feature type="binding site" evidence="1">
    <location>
        <position position="266"/>
    </location>
    <ligand>
        <name>Zn(2+)</name>
        <dbReference type="ChEBI" id="CHEBI:29105"/>
    </ligand>
</feature>
<feature type="binding site" evidence="1">
    <location>
        <begin position="314"/>
        <end position="316"/>
    </location>
    <ligand>
        <name>substrate</name>
    </ligand>
</feature>
<feature type="binding site" evidence="1">
    <location>
        <position position="314"/>
    </location>
    <ligand>
        <name>Zn(2+)</name>
        <dbReference type="ChEBI" id="CHEBI:29105"/>
    </ligand>
</feature>
<feature type="binding site" evidence="1">
    <location>
        <position position="316"/>
    </location>
    <ligand>
        <name>Fe cation</name>
        <dbReference type="ChEBI" id="CHEBI:24875"/>
    </ligand>
</feature>
<feature type="glycosylation site" description="N-linked (GlcNAc...) asparagine" evidence="2">
    <location>
        <position position="91"/>
    </location>
</feature>
<feature type="glycosylation site" description="N-linked (GlcNAc...) asparagine" evidence="2">
    <location>
        <position position="209"/>
    </location>
</feature>
<organism>
    <name type="scientific">Arabidopsis thaliana</name>
    <name type="common">Mouse-ear cress</name>
    <dbReference type="NCBI Taxonomy" id="3702"/>
    <lineage>
        <taxon>Eukaryota</taxon>
        <taxon>Viridiplantae</taxon>
        <taxon>Streptophyta</taxon>
        <taxon>Embryophyta</taxon>
        <taxon>Tracheophyta</taxon>
        <taxon>Spermatophyta</taxon>
        <taxon>Magnoliopsida</taxon>
        <taxon>eudicotyledons</taxon>
        <taxon>Gunneridae</taxon>
        <taxon>Pentapetalae</taxon>
        <taxon>rosids</taxon>
        <taxon>malvids</taxon>
        <taxon>Brassicales</taxon>
        <taxon>Brassicaceae</taxon>
        <taxon>Camelineae</taxon>
        <taxon>Arabidopsis</taxon>
    </lineage>
</organism>
<dbReference type="EMBL" id="AY882860">
    <property type="protein sequence ID" value="AAW80660.1"/>
    <property type="molecule type" value="mRNA"/>
</dbReference>
<dbReference type="EMBL" id="AB023042">
    <property type="protein sequence ID" value="BAA97364.1"/>
    <property type="molecule type" value="Genomic_DNA"/>
</dbReference>
<dbReference type="EMBL" id="CP002688">
    <property type="protein sequence ID" value="AED96852.1"/>
    <property type="molecule type" value="Genomic_DNA"/>
</dbReference>
<dbReference type="EMBL" id="AY136380">
    <property type="protein sequence ID" value="AAM97046.1"/>
    <property type="molecule type" value="mRNA"/>
</dbReference>
<dbReference type="EMBL" id="BT002110">
    <property type="protein sequence ID" value="AAN72121.1"/>
    <property type="molecule type" value="mRNA"/>
</dbReference>
<dbReference type="RefSeq" id="NP_200524.1">
    <property type="nucleotide sequence ID" value="NM_125096.3"/>
</dbReference>
<dbReference type="FunCoup" id="Q9LU72">
    <property type="interactions" value="289"/>
</dbReference>
<dbReference type="GlyCosmos" id="Q9LU72">
    <property type="glycosylation" value="2 sites, No reported glycans"/>
</dbReference>
<dbReference type="GlyGen" id="Q9LU72">
    <property type="glycosylation" value="2 sites"/>
</dbReference>
<dbReference type="PaxDb" id="3702-AT5G57140.1"/>
<dbReference type="ProteomicsDB" id="249029"/>
<dbReference type="EnsemblPlants" id="AT5G57140.1">
    <property type="protein sequence ID" value="AT5G57140.1"/>
    <property type="gene ID" value="AT5G57140"/>
</dbReference>
<dbReference type="GeneID" id="835820"/>
<dbReference type="Gramene" id="AT5G57140.1">
    <property type="protein sequence ID" value="AT5G57140.1"/>
    <property type="gene ID" value="AT5G57140"/>
</dbReference>
<dbReference type="KEGG" id="ath:AT5G57140"/>
<dbReference type="Araport" id="AT5G57140"/>
<dbReference type="TAIR" id="AT5G57140">
    <property type="gene designation" value="PAP28"/>
</dbReference>
<dbReference type="eggNOG" id="KOG1432">
    <property type="taxonomic scope" value="Eukaryota"/>
</dbReference>
<dbReference type="HOGENOM" id="CLU_019692_0_0_1"/>
<dbReference type="InParanoid" id="Q9LU72"/>
<dbReference type="OMA" id="HYGMGSI"/>
<dbReference type="PhylomeDB" id="Q9LU72"/>
<dbReference type="PRO" id="PR:Q9LU72"/>
<dbReference type="Proteomes" id="UP000006548">
    <property type="component" value="Chromosome 5"/>
</dbReference>
<dbReference type="ExpressionAtlas" id="Q9LU72">
    <property type="expression patterns" value="baseline and differential"/>
</dbReference>
<dbReference type="GO" id="GO:0005576">
    <property type="term" value="C:extracellular region"/>
    <property type="evidence" value="ECO:0007669"/>
    <property type="project" value="UniProtKB-SubCell"/>
</dbReference>
<dbReference type="GO" id="GO:0003993">
    <property type="term" value="F:acid phosphatase activity"/>
    <property type="evidence" value="ECO:0000250"/>
    <property type="project" value="TAIR"/>
</dbReference>
<dbReference type="GO" id="GO:0046872">
    <property type="term" value="F:metal ion binding"/>
    <property type="evidence" value="ECO:0007669"/>
    <property type="project" value="UniProtKB-KW"/>
</dbReference>
<dbReference type="CDD" id="cd07383">
    <property type="entry name" value="MPP_Dcr2"/>
    <property type="match status" value="1"/>
</dbReference>
<dbReference type="FunFam" id="3.60.21.10:FF:000038">
    <property type="entry name" value="Probable inactive purple acid phosphatase 29"/>
    <property type="match status" value="1"/>
</dbReference>
<dbReference type="Gene3D" id="3.60.21.10">
    <property type="match status" value="1"/>
</dbReference>
<dbReference type="InterPro" id="IPR004843">
    <property type="entry name" value="Calcineurin-like_PHP_ApaH"/>
</dbReference>
<dbReference type="InterPro" id="IPR029052">
    <property type="entry name" value="Metallo-depent_PP-like"/>
</dbReference>
<dbReference type="InterPro" id="IPR011230">
    <property type="entry name" value="PAP14/16/28/29"/>
</dbReference>
<dbReference type="PANTHER" id="PTHR32440:SF2">
    <property type="entry name" value="INACTIVE PURPLE ACID PHOSPHATASE 28-RELATED"/>
    <property type="match status" value="1"/>
</dbReference>
<dbReference type="PANTHER" id="PTHR32440">
    <property type="entry name" value="PHOSPHATASE DCR2-RELATED-RELATED"/>
    <property type="match status" value="1"/>
</dbReference>
<dbReference type="Pfam" id="PF00149">
    <property type="entry name" value="Metallophos"/>
    <property type="match status" value="1"/>
</dbReference>
<dbReference type="PIRSF" id="PIRSF030250">
    <property type="entry name" value="Ptase_At2g46880"/>
    <property type="match status" value="1"/>
</dbReference>
<dbReference type="SUPFAM" id="SSF56300">
    <property type="entry name" value="Metallo-dependent phosphatases"/>
    <property type="match status" value="1"/>
</dbReference>
<accession>Q9LU72</accession>
<proteinExistence type="evidence at transcript level"/>
<protein>
    <recommendedName>
        <fullName>Probable inactive purple acid phosphatase 28</fullName>
    </recommendedName>
</protein>
<gene>
    <name type="primary">PAP28</name>
    <name type="ordered locus">At5g57140</name>
    <name type="ORF">MUL3.9</name>
</gene>
<reference key="1">
    <citation type="journal article" date="2005" name="Plant Mol. Biol.">
        <title>Expression patterns of purple acid phosphatase genes in Arabidopsis organs and functional analysis of AtPAP23 predominantly transcribed in flower.</title>
        <authorList>
            <person name="Zhu H."/>
            <person name="Qian W."/>
            <person name="Lu X."/>
            <person name="Li D."/>
            <person name="Liu X."/>
            <person name="Liu K."/>
            <person name="Wang D."/>
        </authorList>
    </citation>
    <scope>NUCLEOTIDE SEQUENCE [MRNA]</scope>
    <scope>TISSUE SPECIFICITY</scope>
    <source>
        <strain>cv. Columbia</strain>
    </source>
</reference>
<reference key="2">
    <citation type="journal article" date="2000" name="DNA Res.">
        <title>Structural analysis of Arabidopsis thaliana chromosome 5. X. Sequence features of the regions of 3,076,755 bp covered by sixty P1 and TAC clones.</title>
        <authorList>
            <person name="Sato S."/>
            <person name="Nakamura Y."/>
            <person name="Kaneko T."/>
            <person name="Katoh T."/>
            <person name="Asamizu E."/>
            <person name="Kotani H."/>
            <person name="Tabata S."/>
        </authorList>
    </citation>
    <scope>NUCLEOTIDE SEQUENCE [LARGE SCALE GENOMIC DNA]</scope>
    <source>
        <strain>cv. Columbia</strain>
    </source>
</reference>
<reference key="3">
    <citation type="journal article" date="2017" name="Plant J.">
        <title>Araport11: a complete reannotation of the Arabidopsis thaliana reference genome.</title>
        <authorList>
            <person name="Cheng C.Y."/>
            <person name="Krishnakumar V."/>
            <person name="Chan A.P."/>
            <person name="Thibaud-Nissen F."/>
            <person name="Schobel S."/>
            <person name="Town C.D."/>
        </authorList>
    </citation>
    <scope>GENOME REANNOTATION</scope>
    <source>
        <strain>cv. Columbia</strain>
    </source>
</reference>
<reference key="4">
    <citation type="journal article" date="2003" name="Science">
        <title>Empirical analysis of transcriptional activity in the Arabidopsis genome.</title>
        <authorList>
            <person name="Yamada K."/>
            <person name="Lim J."/>
            <person name="Dale J.M."/>
            <person name="Chen H."/>
            <person name="Shinn P."/>
            <person name="Palm C.J."/>
            <person name="Southwick A.M."/>
            <person name="Wu H.C."/>
            <person name="Kim C.J."/>
            <person name="Nguyen M."/>
            <person name="Pham P.K."/>
            <person name="Cheuk R.F."/>
            <person name="Karlin-Newmann G."/>
            <person name="Liu S.X."/>
            <person name="Lam B."/>
            <person name="Sakano H."/>
            <person name="Wu T."/>
            <person name="Yu G."/>
            <person name="Miranda M."/>
            <person name="Quach H.L."/>
            <person name="Tripp M."/>
            <person name="Chang C.H."/>
            <person name="Lee J.M."/>
            <person name="Toriumi M.J."/>
            <person name="Chan M.M."/>
            <person name="Tang C.C."/>
            <person name="Onodera C.S."/>
            <person name="Deng J.M."/>
            <person name="Akiyama K."/>
            <person name="Ansari Y."/>
            <person name="Arakawa T."/>
            <person name="Banh J."/>
            <person name="Banno F."/>
            <person name="Bowser L."/>
            <person name="Brooks S.Y."/>
            <person name="Carninci P."/>
            <person name="Chao Q."/>
            <person name="Choy N."/>
            <person name="Enju A."/>
            <person name="Goldsmith A.D."/>
            <person name="Gurjal M."/>
            <person name="Hansen N.F."/>
            <person name="Hayashizaki Y."/>
            <person name="Johnson-Hopson C."/>
            <person name="Hsuan V.W."/>
            <person name="Iida K."/>
            <person name="Karnes M."/>
            <person name="Khan S."/>
            <person name="Koesema E."/>
            <person name="Ishida J."/>
            <person name="Jiang P.X."/>
            <person name="Jones T."/>
            <person name="Kawai J."/>
            <person name="Kamiya A."/>
            <person name="Meyers C."/>
            <person name="Nakajima M."/>
            <person name="Narusaka M."/>
            <person name="Seki M."/>
            <person name="Sakurai T."/>
            <person name="Satou M."/>
            <person name="Tamse R."/>
            <person name="Vaysberg M."/>
            <person name="Wallender E.K."/>
            <person name="Wong C."/>
            <person name="Yamamura Y."/>
            <person name="Yuan S."/>
            <person name="Shinozaki K."/>
            <person name="Davis R.W."/>
            <person name="Theologis A."/>
            <person name="Ecker J.R."/>
        </authorList>
    </citation>
    <scope>NUCLEOTIDE SEQUENCE [LARGE SCALE MRNA]</scope>
    <source>
        <strain>cv. Columbia</strain>
    </source>
</reference>
<reference key="5">
    <citation type="journal article" date="2002" name="J. Biol. Chem.">
        <title>Purple acid phosphatases of Arabidopsis thaliana. Comparative analysis and differential regulation by phosphate deprivation.</title>
        <authorList>
            <person name="Li D."/>
            <person name="Zhu H."/>
            <person name="Liu K."/>
            <person name="Liu X."/>
            <person name="Leggewie G."/>
            <person name="Udvardi M."/>
            <person name="Wang D."/>
        </authorList>
    </citation>
    <scope>GENE FAMILY</scope>
    <scope>NOMENCLATURE</scope>
</reference>
<comment type="cofactor">
    <cofactor evidence="1">
        <name>Fe cation</name>
        <dbReference type="ChEBI" id="CHEBI:24875"/>
    </cofactor>
    <text evidence="1">Binds 1 Fe cation per subunit.</text>
</comment>
<comment type="cofactor">
    <cofactor evidence="1">
        <name>Zn(2+)</name>
        <dbReference type="ChEBI" id="CHEBI:29105"/>
    </cofactor>
    <text evidence="1">Binds 1 zinc ion per subunit.</text>
</comment>
<comment type="subunit">
    <text evidence="1">Homodimer.</text>
</comment>
<comment type="subcellular location">
    <subcellularLocation>
        <location evidence="1">Secreted</location>
    </subcellularLocation>
</comment>
<comment type="tissue specificity">
    <text evidence="3">Expressed in roots, stems, leaves, flowers and siliques.</text>
</comment>
<comment type="similarity">
    <text evidence="4">Belongs to the metallophosphoesterase superfamily. Purple acid phosphatase family.</text>
</comment>
<comment type="caution">
    <text evidence="4">Lacks the conserved His residue essential for phosphatase activity. Its enzyme activity is therefore unsure.</text>
</comment>
<sequence length="397" mass="45437">MNCSIGNWKHTVLYLTLIVSLLYFIESLISHKLHINYNKIRLKRSPNLPLRFRDDGTFKILQVADMHFGMGMITRCRDVLDSEFEYCSDLNTTRFLRRMIESERPDLIAFTGDNIFGSSTTDAAESLLEAIGPAIEYGIPWAAVLGNHDHESTLNRLELMTFLSLMDFSVSQINPLVEDETKGDTMRLIDGFGNYRVRVYGAPGSVLANSTVFDLFFFDSGDREIVQGKRTYGWIKESQLRWLQDTSIQGHSQRIHVNPPALAFFHIPILEVRELWYTPFIGQFQEGVACSIVQSGVLQTFVSMGNVKAAFMGHDHVNDFCGTLKGVWFCYGGGFGYHAYGRPNWHRRARVIEAKLGKGRDTWEGIKLIKTWKRLDDEYLSKIDEQVLWETSDSFLK</sequence>
<name>PPA28_ARATH</name>
<evidence type="ECO:0000250" key="1"/>
<evidence type="ECO:0000255" key="2"/>
<evidence type="ECO:0000269" key="3">
    <source>
    </source>
</evidence>
<evidence type="ECO:0000305" key="4"/>
<keyword id="KW-0325">Glycoprotein</keyword>
<keyword id="KW-0408">Iron</keyword>
<keyword id="KW-0479">Metal-binding</keyword>
<keyword id="KW-1185">Reference proteome</keyword>
<keyword id="KW-0964">Secreted</keyword>
<keyword id="KW-0732">Signal</keyword>
<keyword id="KW-0862">Zinc</keyword>